<comment type="function">
    <text evidence="1">Cleaved by the protease thrombin to yield monomers which, together with fibrinogen beta (FGB) and fibrinogen gamma (FGG), polymerize to form an insoluble fibrin matrix. Fibrin has a major function in hemostasis as one of the primary components of blood clots. In addition, functions during the early stages of wound repair to stabilize the lesion and guide cell migration during re-epithelialization. Was originally thought to be essential for platelet aggregation, based on in vitro studies using anticoagulated blood. However, subsequent studies have shown that it is not absolutely required for thrombus formation in vivo. Enhances expression of SELP in activated platelets via an ITGB3-dependent pathway. Maternal fibrinogen is essential for successful pregnancy. Fibrin deposition is also associated with infection, where it protects against IFNG-mediated hemorrhage. May also facilitate the immune response via both innate and T-cell mediated pathways.</text>
</comment>
<comment type="subunit">
    <text evidence="2">Heterohexamer; disulfide linked. Contains 2 sets of 3 non-identical chains (alpha, beta and gamma). The 2 heterotrimers are in head to head conformation with the N-termini in a small central domain (By similarity).</text>
</comment>
<comment type="subcellular location">
    <subcellularLocation>
        <location>Secreted</location>
    </subcellularLocation>
</comment>
<comment type="domain">
    <text evidence="2">A long coiled coil structure formed by 3 polypeptide chains connects the central nodule to the C-terminal domains (distal nodules). The long C-terminal ends of the alpha chains fold back, contributing a fourth strand to the coiled coil structure.</text>
</comment>
<comment type="PTM">
    <text>Conversion of fibrinogen to fibrin is triggered by thrombin, which cleaves fibrinopeptides A and B from alpha and beta chains, and thus exposes the N-terminal polymerization sites responsible for the formation of the soft clot. The soft clot is converted into the hard clot by factor XIIIA which catalyzes the epsilon-(gamma-glutamyl)lysine cross-linking between gamma chains (stronger) and between alpha chains (weaker) of different monomers.</text>
</comment>
<comment type="PTM">
    <text>Forms F13A-mediated cross-links between a glutamine and the epsilon-amino group of a lysine residue, forming fibronectin-fibrinogen heteropolymers.</text>
</comment>
<feature type="peptide" id="PRO_0000009020" description="Fibrinopeptide A">
    <location>
        <begin position="1"/>
        <end position="14"/>
    </location>
</feature>
<feature type="non-terminal residue">
    <location>
        <position position="14"/>
    </location>
</feature>
<sequence length="14" mass="1517">TEEGEFLHEGGGVR</sequence>
<name>FIBA_HORSE</name>
<keyword id="KW-1064">Adaptive immunity</keyword>
<keyword id="KW-0094">Blood coagulation</keyword>
<keyword id="KW-0175">Coiled coil</keyword>
<keyword id="KW-0903">Direct protein sequencing</keyword>
<keyword id="KW-1015">Disulfide bond</keyword>
<keyword id="KW-0356">Hemostasis</keyword>
<keyword id="KW-0391">Immunity</keyword>
<keyword id="KW-0399">Innate immunity</keyword>
<keyword id="KW-1185">Reference proteome</keyword>
<keyword id="KW-0964">Secreted</keyword>
<evidence type="ECO:0000250" key="1">
    <source>
        <dbReference type="UniProtKB" id="E9PV24"/>
    </source>
</evidence>
<evidence type="ECO:0000250" key="2">
    <source>
        <dbReference type="UniProtKB" id="P02671"/>
    </source>
</evidence>
<proteinExistence type="evidence at protein level"/>
<organism>
    <name type="scientific">Equus caballus</name>
    <name type="common">Horse</name>
    <dbReference type="NCBI Taxonomy" id="9796"/>
    <lineage>
        <taxon>Eukaryota</taxon>
        <taxon>Metazoa</taxon>
        <taxon>Chordata</taxon>
        <taxon>Craniata</taxon>
        <taxon>Vertebrata</taxon>
        <taxon>Euteleostomi</taxon>
        <taxon>Mammalia</taxon>
        <taxon>Eutheria</taxon>
        <taxon>Laurasiatheria</taxon>
        <taxon>Perissodactyla</taxon>
        <taxon>Equidae</taxon>
        <taxon>Equus</taxon>
    </lineage>
</organism>
<dbReference type="PeptideAtlas" id="P14452"/>
<dbReference type="InParanoid" id="P14452"/>
<dbReference type="Proteomes" id="UP000002281">
    <property type="component" value="Unplaced"/>
</dbReference>
<dbReference type="GO" id="GO:0005576">
    <property type="term" value="C:extracellular region"/>
    <property type="evidence" value="ECO:0007669"/>
    <property type="project" value="UniProtKB-SubCell"/>
</dbReference>
<dbReference type="GO" id="GO:0002250">
    <property type="term" value="P:adaptive immune response"/>
    <property type="evidence" value="ECO:0007669"/>
    <property type="project" value="UniProtKB-KW"/>
</dbReference>
<dbReference type="GO" id="GO:0007596">
    <property type="term" value="P:blood coagulation"/>
    <property type="evidence" value="ECO:0007669"/>
    <property type="project" value="UniProtKB-KW"/>
</dbReference>
<dbReference type="GO" id="GO:0045087">
    <property type="term" value="P:innate immune response"/>
    <property type="evidence" value="ECO:0007669"/>
    <property type="project" value="UniProtKB-KW"/>
</dbReference>
<protein>
    <recommendedName>
        <fullName>Fibrinogen alpha chain</fullName>
    </recommendedName>
    <component>
        <recommendedName>
            <fullName>Fibrinopeptide A</fullName>
        </recommendedName>
    </component>
</protein>
<gene>
    <name type="primary">FGA</name>
</gene>
<reference key="1">
    <citation type="journal article" date="1965" name="Acta Chem. Scand.">
        <title>Studies on fibrinopeptides from mammals.</title>
        <authorList>
            <person name="Blombaeck B."/>
            <person name="Blombaeck M."/>
            <person name="Grondahl N.J."/>
        </authorList>
    </citation>
    <scope>PROTEIN SEQUENCE</scope>
</reference>
<accession>P14452</accession>